<protein>
    <recommendedName>
        <fullName evidence="1">Small ribosomal subunit protein bS20</fullName>
    </recommendedName>
    <alternativeName>
        <fullName evidence="2">30S ribosomal protein S20</fullName>
    </alternativeName>
</protein>
<sequence length="82" mass="8883">MEVKTLANIKSAIKRAELNVKANEKNSAQKSAMRTAIKAFEANPSEELFRAASSSIDKAESKGLIHKNKASRDKARLAAKLG</sequence>
<feature type="chain" id="PRO_0000260146" description="Small ribosomal subunit protein bS20">
    <location>
        <begin position="1"/>
        <end position="82"/>
    </location>
</feature>
<comment type="function">
    <text evidence="1">Binds directly to 16S ribosomal RNA.</text>
</comment>
<comment type="similarity">
    <text evidence="1">Belongs to the bacterial ribosomal protein bS20 family.</text>
</comment>
<gene>
    <name evidence="1" type="primary">rpsT</name>
    <name type="ordered locus">MGAS2096_Spy1005</name>
</gene>
<evidence type="ECO:0000255" key="1">
    <source>
        <dbReference type="HAMAP-Rule" id="MF_00500"/>
    </source>
</evidence>
<evidence type="ECO:0000305" key="2"/>
<organism>
    <name type="scientific">Streptococcus pyogenes serotype M12 (strain MGAS2096)</name>
    <dbReference type="NCBI Taxonomy" id="370553"/>
    <lineage>
        <taxon>Bacteria</taxon>
        <taxon>Bacillati</taxon>
        <taxon>Bacillota</taxon>
        <taxon>Bacilli</taxon>
        <taxon>Lactobacillales</taxon>
        <taxon>Streptococcaceae</taxon>
        <taxon>Streptococcus</taxon>
    </lineage>
</organism>
<name>RS20_STRPB</name>
<accession>Q1JBK1</accession>
<dbReference type="EMBL" id="CP000261">
    <property type="protein sequence ID" value="ABF36057.1"/>
    <property type="molecule type" value="Genomic_DNA"/>
</dbReference>
<dbReference type="SMR" id="Q1JBK1"/>
<dbReference type="KEGG" id="spj:MGAS2096_Spy1005"/>
<dbReference type="HOGENOM" id="CLU_160655_1_1_9"/>
<dbReference type="GO" id="GO:0005829">
    <property type="term" value="C:cytosol"/>
    <property type="evidence" value="ECO:0007669"/>
    <property type="project" value="TreeGrafter"/>
</dbReference>
<dbReference type="GO" id="GO:0015935">
    <property type="term" value="C:small ribosomal subunit"/>
    <property type="evidence" value="ECO:0007669"/>
    <property type="project" value="TreeGrafter"/>
</dbReference>
<dbReference type="GO" id="GO:0070181">
    <property type="term" value="F:small ribosomal subunit rRNA binding"/>
    <property type="evidence" value="ECO:0007669"/>
    <property type="project" value="TreeGrafter"/>
</dbReference>
<dbReference type="GO" id="GO:0003735">
    <property type="term" value="F:structural constituent of ribosome"/>
    <property type="evidence" value="ECO:0007669"/>
    <property type="project" value="InterPro"/>
</dbReference>
<dbReference type="GO" id="GO:0006412">
    <property type="term" value="P:translation"/>
    <property type="evidence" value="ECO:0007669"/>
    <property type="project" value="UniProtKB-UniRule"/>
</dbReference>
<dbReference type="FunFam" id="1.20.58.110:FF:000001">
    <property type="entry name" value="30S ribosomal protein S20"/>
    <property type="match status" value="1"/>
</dbReference>
<dbReference type="Gene3D" id="1.20.58.110">
    <property type="entry name" value="Ribosomal protein S20"/>
    <property type="match status" value="1"/>
</dbReference>
<dbReference type="HAMAP" id="MF_00500">
    <property type="entry name" value="Ribosomal_bS20"/>
    <property type="match status" value="1"/>
</dbReference>
<dbReference type="InterPro" id="IPR002583">
    <property type="entry name" value="Ribosomal_bS20"/>
</dbReference>
<dbReference type="InterPro" id="IPR036510">
    <property type="entry name" value="Ribosomal_bS20_sf"/>
</dbReference>
<dbReference type="NCBIfam" id="TIGR00029">
    <property type="entry name" value="S20"/>
    <property type="match status" value="1"/>
</dbReference>
<dbReference type="PANTHER" id="PTHR33398">
    <property type="entry name" value="30S RIBOSOMAL PROTEIN S20"/>
    <property type="match status" value="1"/>
</dbReference>
<dbReference type="PANTHER" id="PTHR33398:SF1">
    <property type="entry name" value="SMALL RIBOSOMAL SUBUNIT PROTEIN BS20C"/>
    <property type="match status" value="1"/>
</dbReference>
<dbReference type="Pfam" id="PF01649">
    <property type="entry name" value="Ribosomal_S20p"/>
    <property type="match status" value="1"/>
</dbReference>
<dbReference type="SUPFAM" id="SSF46992">
    <property type="entry name" value="Ribosomal protein S20"/>
    <property type="match status" value="1"/>
</dbReference>
<reference key="1">
    <citation type="journal article" date="2006" name="Proc. Natl. Acad. Sci. U.S.A.">
        <title>Molecular genetic anatomy of inter- and intraserotype variation in the human bacterial pathogen group A Streptococcus.</title>
        <authorList>
            <person name="Beres S.B."/>
            <person name="Richter E.W."/>
            <person name="Nagiec M.J."/>
            <person name="Sumby P."/>
            <person name="Porcella S.F."/>
            <person name="DeLeo F.R."/>
            <person name="Musser J.M."/>
        </authorList>
    </citation>
    <scope>NUCLEOTIDE SEQUENCE [LARGE SCALE GENOMIC DNA]</scope>
    <source>
        <strain>MGAS2096</strain>
    </source>
</reference>
<keyword id="KW-0687">Ribonucleoprotein</keyword>
<keyword id="KW-0689">Ribosomal protein</keyword>
<keyword id="KW-0694">RNA-binding</keyword>
<keyword id="KW-0699">rRNA-binding</keyword>
<proteinExistence type="inferred from homology"/>